<feature type="chain" id="PRO_1000121784" description="Large ribosomal subunit protein uL29">
    <location>
        <begin position="1"/>
        <end position="65"/>
    </location>
</feature>
<dbReference type="EMBL" id="CP001013">
    <property type="protein sequence ID" value="ACB36245.1"/>
    <property type="molecule type" value="Genomic_DNA"/>
</dbReference>
<dbReference type="RefSeq" id="WP_012348990.1">
    <property type="nucleotide sequence ID" value="NC_010524.1"/>
</dbReference>
<dbReference type="SMR" id="B1Y8H9"/>
<dbReference type="STRING" id="395495.Lcho_3991"/>
<dbReference type="KEGG" id="lch:Lcho_3991"/>
<dbReference type="eggNOG" id="COG0255">
    <property type="taxonomic scope" value="Bacteria"/>
</dbReference>
<dbReference type="HOGENOM" id="CLU_158491_1_1_4"/>
<dbReference type="OrthoDB" id="9815192at2"/>
<dbReference type="Proteomes" id="UP000001693">
    <property type="component" value="Chromosome"/>
</dbReference>
<dbReference type="GO" id="GO:0022625">
    <property type="term" value="C:cytosolic large ribosomal subunit"/>
    <property type="evidence" value="ECO:0007669"/>
    <property type="project" value="TreeGrafter"/>
</dbReference>
<dbReference type="GO" id="GO:0003735">
    <property type="term" value="F:structural constituent of ribosome"/>
    <property type="evidence" value="ECO:0007669"/>
    <property type="project" value="InterPro"/>
</dbReference>
<dbReference type="GO" id="GO:0006412">
    <property type="term" value="P:translation"/>
    <property type="evidence" value="ECO:0007669"/>
    <property type="project" value="UniProtKB-UniRule"/>
</dbReference>
<dbReference type="CDD" id="cd00427">
    <property type="entry name" value="Ribosomal_L29_HIP"/>
    <property type="match status" value="1"/>
</dbReference>
<dbReference type="FunFam" id="1.10.287.310:FF:000001">
    <property type="entry name" value="50S ribosomal protein L29"/>
    <property type="match status" value="1"/>
</dbReference>
<dbReference type="Gene3D" id="1.10.287.310">
    <property type="match status" value="1"/>
</dbReference>
<dbReference type="HAMAP" id="MF_00374">
    <property type="entry name" value="Ribosomal_uL29"/>
    <property type="match status" value="1"/>
</dbReference>
<dbReference type="InterPro" id="IPR050063">
    <property type="entry name" value="Ribosomal_protein_uL29"/>
</dbReference>
<dbReference type="InterPro" id="IPR001854">
    <property type="entry name" value="Ribosomal_uL29"/>
</dbReference>
<dbReference type="InterPro" id="IPR018254">
    <property type="entry name" value="Ribosomal_uL29_CS"/>
</dbReference>
<dbReference type="InterPro" id="IPR036049">
    <property type="entry name" value="Ribosomal_uL29_sf"/>
</dbReference>
<dbReference type="NCBIfam" id="TIGR00012">
    <property type="entry name" value="L29"/>
    <property type="match status" value="1"/>
</dbReference>
<dbReference type="PANTHER" id="PTHR10916">
    <property type="entry name" value="60S RIBOSOMAL PROTEIN L35/50S RIBOSOMAL PROTEIN L29"/>
    <property type="match status" value="1"/>
</dbReference>
<dbReference type="PANTHER" id="PTHR10916:SF0">
    <property type="entry name" value="LARGE RIBOSOMAL SUBUNIT PROTEIN UL29C"/>
    <property type="match status" value="1"/>
</dbReference>
<dbReference type="Pfam" id="PF00831">
    <property type="entry name" value="Ribosomal_L29"/>
    <property type="match status" value="1"/>
</dbReference>
<dbReference type="SUPFAM" id="SSF46561">
    <property type="entry name" value="Ribosomal protein L29 (L29p)"/>
    <property type="match status" value="1"/>
</dbReference>
<dbReference type="PROSITE" id="PS00579">
    <property type="entry name" value="RIBOSOMAL_L29"/>
    <property type="match status" value="1"/>
</dbReference>
<evidence type="ECO:0000255" key="1">
    <source>
        <dbReference type="HAMAP-Rule" id="MF_00374"/>
    </source>
</evidence>
<evidence type="ECO:0000305" key="2"/>
<name>RL29_LEPCP</name>
<reference key="1">
    <citation type="submission" date="2008-03" db="EMBL/GenBank/DDBJ databases">
        <title>Complete sequence of Leptothrix cholodnii SP-6.</title>
        <authorList>
            <consortium name="US DOE Joint Genome Institute"/>
            <person name="Copeland A."/>
            <person name="Lucas S."/>
            <person name="Lapidus A."/>
            <person name="Glavina del Rio T."/>
            <person name="Dalin E."/>
            <person name="Tice H."/>
            <person name="Bruce D."/>
            <person name="Goodwin L."/>
            <person name="Pitluck S."/>
            <person name="Chertkov O."/>
            <person name="Brettin T."/>
            <person name="Detter J.C."/>
            <person name="Han C."/>
            <person name="Kuske C.R."/>
            <person name="Schmutz J."/>
            <person name="Larimer F."/>
            <person name="Land M."/>
            <person name="Hauser L."/>
            <person name="Kyrpides N."/>
            <person name="Lykidis A."/>
            <person name="Emerson D."/>
            <person name="Richardson P."/>
        </authorList>
    </citation>
    <scope>NUCLEOTIDE SEQUENCE [LARGE SCALE GENOMIC DNA]</scope>
    <source>
        <strain>ATCC 51168 / LMG 8142 / SP-6</strain>
    </source>
</reference>
<protein>
    <recommendedName>
        <fullName evidence="1">Large ribosomal subunit protein uL29</fullName>
    </recommendedName>
    <alternativeName>
        <fullName evidence="2">50S ribosomal protein L29</fullName>
    </alternativeName>
</protein>
<keyword id="KW-1185">Reference proteome</keyword>
<keyword id="KW-0687">Ribonucleoprotein</keyword>
<keyword id="KW-0689">Ribosomal protein</keyword>
<accession>B1Y8H9</accession>
<comment type="similarity">
    <text evidence="1">Belongs to the universal ribosomal protein uL29 family.</text>
</comment>
<organism>
    <name type="scientific">Leptothrix cholodnii (strain ATCC 51168 / LMG 8142 / SP-6)</name>
    <name type="common">Leptothrix discophora (strain SP-6)</name>
    <dbReference type="NCBI Taxonomy" id="395495"/>
    <lineage>
        <taxon>Bacteria</taxon>
        <taxon>Pseudomonadati</taxon>
        <taxon>Pseudomonadota</taxon>
        <taxon>Betaproteobacteria</taxon>
        <taxon>Burkholderiales</taxon>
        <taxon>Sphaerotilaceae</taxon>
        <taxon>Leptothrix</taxon>
    </lineage>
</organism>
<gene>
    <name evidence="1" type="primary">rpmC</name>
    <name type="ordered locus">Lcho_3991</name>
</gene>
<sequence>MKASELRAKDVAALEKEISDLLKAHFGLRMQKATQQLTNHSVIKQTRRDIARARTILTEKKKGAA</sequence>
<proteinExistence type="inferred from homology"/>